<proteinExistence type="evidence at protein level"/>
<evidence type="ECO:0000250" key="1"/>
<evidence type="ECO:0000250" key="2">
    <source>
        <dbReference type="UniProtKB" id="P60879"/>
    </source>
</evidence>
<evidence type="ECO:0000250" key="3">
    <source>
        <dbReference type="UniProtKB" id="P60880"/>
    </source>
</evidence>
<evidence type="ECO:0000255" key="4">
    <source>
        <dbReference type="PROSITE-ProRule" id="PRU00202"/>
    </source>
</evidence>
<evidence type="ECO:0000256" key="5">
    <source>
        <dbReference type="SAM" id="MobiDB-lite"/>
    </source>
</evidence>
<evidence type="ECO:0000269" key="6">
    <source>
    </source>
</evidence>
<evidence type="ECO:0000269" key="7">
    <source>
    </source>
</evidence>
<evidence type="ECO:0000269" key="8">
    <source>
    </source>
</evidence>
<evidence type="ECO:0000269" key="9">
    <source>
    </source>
</evidence>
<evidence type="ECO:0000269" key="10">
    <source>
    </source>
</evidence>
<evidence type="ECO:0000269" key="11">
    <source>
    </source>
</evidence>
<evidence type="ECO:0000269" key="12">
    <source>
    </source>
</evidence>
<evidence type="ECO:0000269" key="13">
    <source>
    </source>
</evidence>
<evidence type="ECO:0000269" key="14">
    <source>
    </source>
</evidence>
<evidence type="ECO:0000269" key="15">
    <source>
    </source>
</evidence>
<evidence type="ECO:0000269" key="16">
    <source>
    </source>
</evidence>
<evidence type="ECO:0000269" key="17">
    <source>
    </source>
</evidence>
<evidence type="ECO:0000269" key="18">
    <source>
    </source>
</evidence>
<evidence type="ECO:0000269" key="19">
    <source>
    </source>
</evidence>
<evidence type="ECO:0000303" key="20">
    <source ref="1"/>
</evidence>
<evidence type="ECO:0000303" key="21">
    <source ref="2"/>
</evidence>
<evidence type="ECO:0000305" key="22"/>
<evidence type="ECO:0000305" key="23">
    <source>
    </source>
</evidence>
<evidence type="ECO:0000305" key="24">
    <source>
    </source>
</evidence>
<evidence type="ECO:0007829" key="25">
    <source>
        <dbReference type="PDB" id="1N7S"/>
    </source>
</evidence>
<comment type="function">
    <text evidence="9 23 24">t-SNARE involved in the molecular regulation of neurotransmitter release (PubMed:8103915, PubMed:8243676). May play an important role in the synaptic function of specific neuronal systems. Associates with proteins involved in vesicle docking and membrane fusion. Regulates plasma membrane recycling through its interaction with CENPF. Modulates the gating characteristics of the delayed rectifier voltage-dependent potassium channel KCNB1 in pancreatic beta cells (PubMed:12403834).</text>
</comment>
<comment type="subunit">
    <text evidence="2 6 7 8 9 11 13 14 15 18 19">Part of the SNARE core complex containing SNAP25, VAMP2 and STX1A;this complex constitutes the basic catalytic machinery of the complex neurotransmitter release apparatus (PubMed:12496247, PubMed:19196426, PubMed:9759724). Recruited to the SNARE complex following binding of the SNARE complex component STX1A to STXBP1 (By similarity). This complex binds CPLX1 (PubMed:12496247, PubMed:19196426, PubMed:9759724). Found in a complex containing SYT1, SV2B and syntaxin-1 (By similarity). Found in a ternary complex with STX1A and VAMP8 (PubMed:10336434). Interacts with HSC70 and with SYT9, forming a complex with DNAJC5 (By similarity). The interaction with SYT9 is inhibited in presence of calcium (By similarity). Isoform 1 and isoform 2 interact with BLOC1S6 (By similarity). Interacts with CENPF (By similarity). Interacts with EQTN (By similarity). Interacts with HGS (PubMed:9039916). Interacts with KCNB1 (via N-terminus); reduces the voltage-dependent potassium channel KCNB1 activity in pancreatic beta cells (PubMed:12403834). Interacts with OTOF (By similarity). Interacts with RIMS1 (PubMed:11438518). Interacts with SNAPIN (By similarity). Interacts with STXBP6 (PubMed:12145319). Interacts with TRIM9 (By similarity). Interacts with ZDHHC13 (via ANK repeats) (PubMed:26198635). Interacts with ZDHHC17 (via ANK repeats) (PubMed:26198635). Associates with the BLOC-1 complex (By similarity). Interacts with PLCL1 (via C2 domain) (PubMed:23341457). Interacts with PRRT2; this interaction may impair the formation of the SNARE complex (By similarity). Interacts with alpha-synuclein/SNCA (By similarity). Interacts with PRPH2 (By similarity). Interacts with ROM1 (By similarity). Interacts with STX3 (By similarity).</text>
</comment>
<comment type="interaction">
    <interactant intactId="EBI-1027214">
        <id>P60881</id>
    </interactant>
    <interactant intactId="EBI-1027524">
        <id>P47709</id>
        <label>Rph3a</label>
    </interactant>
    <organismsDiffer>false</organismsDiffer>
    <experiments>4</experiments>
</comment>
<comment type="interaction">
    <interactant intactId="EBI-1027214">
        <id>P60881</id>
    </interactant>
    <interactant intactId="EBI-1394088">
        <id>Q9QXY2</id>
        <label>Srcin1</label>
    </interactant>
    <organismsDiffer>false</organismsDiffer>
    <experiments>3</experiments>
</comment>
<comment type="interaction">
    <interactant intactId="EBI-1027214">
        <id>P60881</id>
    </interactant>
    <interactant intactId="EBI-539720">
        <id>P32851</id>
        <label>Stx1a</label>
    </interactant>
    <organismsDiffer>false</organismsDiffer>
    <experiments>29</experiments>
</comment>
<comment type="interaction">
    <interactant intactId="EBI-1027214">
        <id>P60881</id>
    </interactant>
    <interactant intactId="EBI-8311156">
        <id>Q08849</id>
        <label>Stx3</label>
    </interactant>
    <organismsDiffer>false</organismsDiffer>
    <experiments>4</experiments>
</comment>
<comment type="interaction">
    <interactant intactId="EBI-1027214">
        <id>P60881</id>
    </interactant>
    <interactant intactId="EBI-458098">
        <id>P21707</id>
        <label>Syt1</label>
    </interactant>
    <organismsDiffer>false</organismsDiffer>
    <experiments>24</experiments>
</comment>
<comment type="interaction">
    <interactant intactId="EBI-15685612">
        <id>P60881-2</id>
    </interactant>
    <interactant intactId="EBI-539720">
        <id>P32851</id>
        <label>Stx1a</label>
    </interactant>
    <organismsDiffer>false</organismsDiffer>
    <experiments>6</experiments>
</comment>
<comment type="interaction">
    <interactant intactId="EBI-15685612">
        <id>P60881-2</id>
    </interactant>
    <interactant intactId="EBI-520880">
        <id>P63045</id>
        <label>Vamp2</label>
    </interactant>
    <organismsDiffer>false</organismsDiffer>
    <experiments>4</experiments>
</comment>
<comment type="subcellular location">
    <subcellularLocation>
        <location evidence="2">Cytoplasm</location>
        <location evidence="2">Perinuclear region</location>
    </subcellularLocation>
    <subcellularLocation>
        <location evidence="9 14">Cell membrane</location>
        <topology evidence="2">Lipid-anchor</topology>
    </subcellularLocation>
    <subcellularLocation>
        <location evidence="12">Synapse</location>
        <location evidence="12">Synaptosome</location>
    </subcellularLocation>
    <subcellularLocation>
        <location evidence="2">Photoreceptor inner segment</location>
    </subcellularLocation>
    <text evidence="2 9 12 14">Membrane association requires palmitoylation (By similarity). Expressed throughout cytoplasm, concentrating at the perinuclear region (By similarity). Colocalizes with KCNB1 at the cell membrane (PubMed:12403834). Colocalizes with PLCL1 at the cell membrane (PubMed:23341457).</text>
</comment>
<comment type="alternative products">
    <event type="alternative splicing"/>
    <isoform>
        <id>P60881-1</id>
        <id>P13795-1</id>
        <name>1</name>
        <name>SNAP-25b</name>
        <sequence type="displayed"/>
    </isoform>
    <isoform>
        <id>P60881-2</id>
        <id>P13795-2</id>
        <name>2</name>
        <name>SNAP-25a</name>
        <sequence type="described" ref="VSP_010020"/>
    </isoform>
    <text>Isoforms differ by the usage of two alternative homologous exons (5a and 5b) which code for positions 56 to 94 and differ only in 9 positions out of 39.</text>
</comment>
<comment type="PTM">
    <text evidence="2">Palmitoylated. Cys-85 appears to be the main site, and palmitoylation is required for membrane association (By similarity).</text>
</comment>
<comment type="PTM">
    <text evidence="16 17 23">(Microbial infection) Targeted and hydrolyzed by C.botulinum neurotoxin type A (BoNT/A, botA) which hydrolyzes the 197-Gln-|-Arg-198 bond and inhibits neurotransmitter release (PubMed:8103915, PubMed:8243676).</text>
</comment>
<comment type="PTM">
    <text evidence="16 17 23">(Microbial infection) Targeted and hydrolyzed by C.botulinum neurotoxin type E (BoNT/E) which hydrolyzes the 180-Arg-|-Ile-181 bond and inhibits neurotransmitter release (PubMed:8103915, PubMed:8243676).</text>
</comment>
<comment type="similarity">
    <text evidence="22">Belongs to the SNAP-25 family.</text>
</comment>
<accession>P60881</accession>
<accession>P13795</accession>
<accession>P36974</accession>
<accession>P70557</accession>
<accession>P70558</accession>
<accession>Q8IXK3</accession>
<accession>Q96FM2</accession>
<accession>Q9BR45</accession>
<dbReference type="EMBL" id="AB003991">
    <property type="protein sequence ID" value="BAA20151.1"/>
    <property type="molecule type" value="mRNA"/>
</dbReference>
<dbReference type="EMBL" id="AB003992">
    <property type="protein sequence ID" value="BAA20152.1"/>
    <property type="molecule type" value="mRNA"/>
</dbReference>
<dbReference type="EMBL" id="AF245227">
    <property type="protein sequence ID" value="AAF81202.1"/>
    <property type="molecule type" value="mRNA"/>
</dbReference>
<dbReference type="EMBL" id="U56262">
    <property type="protein sequence ID" value="AAA99826.1"/>
    <property type="molecule type" value="mRNA"/>
</dbReference>
<dbReference type="EMBL" id="BC087699">
    <property type="protein sequence ID" value="AAH87699.1"/>
    <property type="molecule type" value="mRNA"/>
</dbReference>
<dbReference type="EMBL" id="U56261">
    <property type="protein sequence ID" value="AAA99825.1"/>
    <property type="molecule type" value="mRNA"/>
</dbReference>
<dbReference type="RefSeq" id="NP_001257504.1">
    <molecule id="P60881-2"/>
    <property type="nucleotide sequence ID" value="NM_001270575.1"/>
</dbReference>
<dbReference type="RefSeq" id="NP_001257505.1">
    <molecule id="P60881-2"/>
    <property type="nucleotide sequence ID" value="NM_001270576.1"/>
</dbReference>
<dbReference type="RefSeq" id="NP_112253.1">
    <molecule id="P60881-1"/>
    <property type="nucleotide sequence ID" value="NM_030991.3"/>
</dbReference>
<dbReference type="RefSeq" id="XP_038960242.1">
    <molecule id="P60881-1"/>
    <property type="nucleotide sequence ID" value="XM_039104314.2"/>
</dbReference>
<dbReference type="PDB" id="1JTH">
    <property type="method" value="X-ray"/>
    <property type="resolution" value="2.00 A"/>
    <property type="chains" value="A/C=1-82"/>
</dbReference>
<dbReference type="PDB" id="1N7S">
    <property type="method" value="X-ray"/>
    <property type="resolution" value="1.45 A"/>
    <property type="chains" value="C=7-83, D=141-204"/>
</dbReference>
<dbReference type="PDB" id="1SFC">
    <property type="method" value="X-ray"/>
    <property type="resolution" value="2.40 A"/>
    <property type="chains" value="C/G/K=1-83, D/H/L=120-206"/>
</dbReference>
<dbReference type="PDB" id="1URQ">
    <property type="method" value="X-ray"/>
    <property type="resolution" value="2.00 A"/>
    <property type="chains" value="C=7-83, D=142-204"/>
</dbReference>
<dbReference type="PDB" id="3HD7">
    <property type="method" value="X-ray"/>
    <property type="resolution" value="3.40 A"/>
    <property type="chains" value="C/G=7-83, D/H=141-204"/>
</dbReference>
<dbReference type="PDB" id="3IPD">
    <property type="method" value="X-ray"/>
    <property type="resolution" value="4.80 A"/>
    <property type="chains" value="C/G=7-83, D/H=141-204"/>
</dbReference>
<dbReference type="PDB" id="3J96">
    <property type="method" value="EM"/>
    <property type="resolution" value="7.60 A"/>
    <property type="chains" value="M=17-204"/>
</dbReference>
<dbReference type="PDB" id="3J97">
    <property type="method" value="EM"/>
    <property type="resolution" value="7.80 A"/>
    <property type="chains" value="M=7-204"/>
</dbReference>
<dbReference type="PDB" id="3J98">
    <property type="method" value="EM"/>
    <property type="resolution" value="8.40 A"/>
    <property type="chains" value="M=17-204"/>
</dbReference>
<dbReference type="PDB" id="3J99">
    <property type="method" value="EM"/>
    <property type="resolution" value="8.20 A"/>
    <property type="chains" value="M=17-204"/>
</dbReference>
<dbReference type="PDB" id="5CCG">
    <property type="method" value="X-ray"/>
    <property type="resolution" value="3.50 A"/>
    <property type="chains" value="C/I=7-83, D/J=141-204"/>
</dbReference>
<dbReference type="PDB" id="5CCH">
    <property type="method" value="X-ray"/>
    <property type="resolution" value="3.60 A"/>
    <property type="chains" value="C=7-83, D=141-204"/>
</dbReference>
<dbReference type="PDB" id="5CCI">
    <property type="method" value="X-ray"/>
    <property type="resolution" value="4.10 A"/>
    <property type="chains" value="C=7-83, D=141-204"/>
</dbReference>
<dbReference type="PDB" id="5KJ7">
    <property type="method" value="X-ray"/>
    <property type="resolution" value="3.50 A"/>
    <property type="chains" value="C/I=9-83, D/J=141-204"/>
</dbReference>
<dbReference type="PDB" id="5KJ8">
    <property type="method" value="X-ray"/>
    <property type="resolution" value="4.10 A"/>
    <property type="chains" value="C/I=9-83, D/J=141-204"/>
</dbReference>
<dbReference type="PDB" id="5LOB">
    <property type="method" value="X-ray"/>
    <property type="resolution" value="3.30 A"/>
    <property type="chains" value="D/F=7-82, E/G=141-203"/>
</dbReference>
<dbReference type="PDB" id="5LOW">
    <property type="method" value="X-ray"/>
    <property type="resolution" value="2.80 A"/>
    <property type="chains" value="D/F/K/M=7-82, E/G/L/N=141-203"/>
</dbReference>
<dbReference type="PDB" id="5W5C">
    <property type="method" value="X-ray"/>
    <property type="resolution" value="1.85 A"/>
    <property type="chains" value="C=7-83, D=141-204"/>
</dbReference>
<dbReference type="PDB" id="5W5D">
    <property type="method" value="X-ray"/>
    <property type="resolution" value="2.50 A"/>
    <property type="chains" value="C=7-83, D=141-204"/>
</dbReference>
<dbReference type="PDB" id="6IP1">
    <property type="method" value="EM"/>
    <property type="resolution" value="3.90 A"/>
    <property type="chains" value="C=1-100, D=126-206"/>
</dbReference>
<dbReference type="PDB" id="6MDM">
    <property type="method" value="EM"/>
    <property type="resolution" value="4.40 A"/>
    <property type="chains" value="H=1-204"/>
</dbReference>
<dbReference type="PDB" id="6MDN">
    <property type="method" value="EM"/>
    <property type="resolution" value="4.40 A"/>
    <property type="chains" value="H=1-204"/>
</dbReference>
<dbReference type="PDB" id="6MDO">
    <property type="method" value="EM"/>
    <property type="resolution" value="3.90 A"/>
    <property type="chains" value="H=1-204"/>
</dbReference>
<dbReference type="PDB" id="6MDP">
    <property type="method" value="EM"/>
    <property type="resolution" value="3.80 A"/>
    <property type="chains" value="H=1-204"/>
</dbReference>
<dbReference type="PDB" id="6MTI">
    <property type="method" value="EM"/>
    <property type="resolution" value="10.40 A"/>
    <property type="chains" value="C/G/K/O/S/W=7-83, D/H/L/P/T/X=141-204"/>
</dbReference>
<dbReference type="PDB" id="6WVW">
    <property type="method" value="X-ray"/>
    <property type="resolution" value="2.11 A"/>
    <property type="chains" value="C/G=10-83, D/H=141-204"/>
</dbReference>
<dbReference type="PDBsum" id="1JTH"/>
<dbReference type="PDBsum" id="1N7S"/>
<dbReference type="PDBsum" id="1SFC"/>
<dbReference type="PDBsum" id="1URQ"/>
<dbReference type="PDBsum" id="3HD7"/>
<dbReference type="PDBsum" id="3IPD"/>
<dbReference type="PDBsum" id="3J96"/>
<dbReference type="PDBsum" id="3J97"/>
<dbReference type="PDBsum" id="3J98"/>
<dbReference type="PDBsum" id="3J99"/>
<dbReference type="PDBsum" id="5CCG"/>
<dbReference type="PDBsum" id="5CCH"/>
<dbReference type="PDBsum" id="5CCI"/>
<dbReference type="PDBsum" id="5KJ7"/>
<dbReference type="PDBsum" id="5KJ8"/>
<dbReference type="PDBsum" id="5LOB"/>
<dbReference type="PDBsum" id="5LOW"/>
<dbReference type="PDBsum" id="5W5C"/>
<dbReference type="PDBsum" id="5W5D"/>
<dbReference type="PDBsum" id="6IP1"/>
<dbReference type="PDBsum" id="6MDM"/>
<dbReference type="PDBsum" id="6MDN"/>
<dbReference type="PDBsum" id="6MDO"/>
<dbReference type="PDBsum" id="6MDP"/>
<dbReference type="PDBsum" id="6MTI"/>
<dbReference type="PDBsum" id="6WVW"/>
<dbReference type="EMDB" id="EMD-6206"/>
<dbReference type="EMDB" id="EMD-6207"/>
<dbReference type="EMDB" id="EMD-6208"/>
<dbReference type="EMDB" id="EMD-6209"/>
<dbReference type="EMDB" id="EMD-6210"/>
<dbReference type="EMDB" id="EMD-9100"/>
<dbReference type="EMDB" id="EMD-9101"/>
<dbReference type="EMDB" id="EMD-9102"/>
<dbReference type="EMDB" id="EMD-9103"/>
<dbReference type="EMDB" id="EMD-9697"/>
<dbReference type="SMR" id="P60881"/>
<dbReference type="BioGRID" id="247095">
    <property type="interactions" value="22"/>
</dbReference>
<dbReference type="CORUM" id="P60881"/>
<dbReference type="DIP" id="DIP-29205N"/>
<dbReference type="FunCoup" id="P60881">
    <property type="interactions" value="832"/>
</dbReference>
<dbReference type="IntAct" id="P60881">
    <property type="interactions" value="27"/>
</dbReference>
<dbReference type="MINT" id="P60881"/>
<dbReference type="ChEMBL" id="CHEMBL1075243"/>
<dbReference type="iPTMnet" id="P60881"/>
<dbReference type="PhosphoSitePlus" id="P60881"/>
<dbReference type="SwissPalm" id="P60881"/>
<dbReference type="jPOST" id="P60881"/>
<dbReference type="PaxDb" id="10116-ENSRNOP00000007998"/>
<dbReference type="Ensembl" id="ENSRNOT00000007998.8">
    <molecule id="P60881-2"/>
    <property type="protein sequence ID" value="ENSRNOP00000007998.7"/>
    <property type="gene ID" value="ENSRNOG00000006037.9"/>
</dbReference>
<dbReference type="Ensembl" id="ENSRNOT00000080581.2">
    <molecule id="P60881-1"/>
    <property type="protein sequence ID" value="ENSRNOP00000072612.2"/>
    <property type="gene ID" value="ENSRNOG00000006037.9"/>
</dbReference>
<dbReference type="GeneID" id="25012"/>
<dbReference type="KEGG" id="rno:25012"/>
<dbReference type="UCSC" id="RGD:3728">
    <property type="organism name" value="rat"/>
</dbReference>
<dbReference type="AGR" id="RGD:3728"/>
<dbReference type="CTD" id="6616"/>
<dbReference type="RGD" id="3728">
    <property type="gene designation" value="Snap25"/>
</dbReference>
<dbReference type="eggNOG" id="KOG3065">
    <property type="taxonomic scope" value="Eukaryota"/>
</dbReference>
<dbReference type="GeneTree" id="ENSGT00950000182843"/>
<dbReference type="InParanoid" id="P60881"/>
<dbReference type="OMA" id="GMIQINE"/>
<dbReference type="OrthoDB" id="17350at9989"/>
<dbReference type="PhylomeDB" id="P60881"/>
<dbReference type="Reactome" id="R-RNO-181429">
    <property type="pathway name" value="Serotonin Neurotransmitter Release Cycle"/>
</dbReference>
<dbReference type="Reactome" id="R-RNO-181430">
    <property type="pathway name" value="Norepinephrine Neurotransmitter Release Cycle"/>
</dbReference>
<dbReference type="Reactome" id="R-RNO-210500">
    <property type="pathway name" value="Glutamate Neurotransmitter Release Cycle"/>
</dbReference>
<dbReference type="Reactome" id="R-RNO-212676">
    <property type="pathway name" value="Dopamine Neurotransmitter Release Cycle"/>
</dbReference>
<dbReference type="Reactome" id="R-RNO-264642">
    <property type="pathway name" value="Acetylcholine Neurotransmitter Release Cycle"/>
</dbReference>
<dbReference type="Reactome" id="R-RNO-449836">
    <property type="pathway name" value="Other interleukin signaling"/>
</dbReference>
<dbReference type="Reactome" id="R-RNO-6798695">
    <property type="pathway name" value="Neutrophil degranulation"/>
</dbReference>
<dbReference type="Reactome" id="R-RNO-888590">
    <property type="pathway name" value="GABA synthesis, release, reuptake and degradation"/>
</dbReference>
<dbReference type="EvolutionaryTrace" id="P60881"/>
<dbReference type="PRO" id="PR:P60881"/>
<dbReference type="Proteomes" id="UP000002494">
    <property type="component" value="Chromosome 3"/>
</dbReference>
<dbReference type="GO" id="GO:0015629">
    <property type="term" value="C:actin cytoskeleton"/>
    <property type="evidence" value="ECO:0000314"/>
    <property type="project" value="RGD"/>
</dbReference>
<dbReference type="GO" id="GO:0030424">
    <property type="term" value="C:axon"/>
    <property type="evidence" value="ECO:0000314"/>
    <property type="project" value="MGI"/>
</dbReference>
<dbReference type="GO" id="GO:0044295">
    <property type="term" value="C:axonal growth cone"/>
    <property type="evidence" value="ECO:0000314"/>
    <property type="project" value="MGI"/>
</dbReference>
<dbReference type="GO" id="GO:0031083">
    <property type="term" value="C:BLOC-1 complex"/>
    <property type="evidence" value="ECO:0000266"/>
    <property type="project" value="RGD"/>
</dbReference>
<dbReference type="GO" id="GO:0005938">
    <property type="term" value="C:cell cortex"/>
    <property type="evidence" value="ECO:0000266"/>
    <property type="project" value="RGD"/>
</dbReference>
<dbReference type="GO" id="GO:0005737">
    <property type="term" value="C:cytoplasm"/>
    <property type="evidence" value="ECO:0000266"/>
    <property type="project" value="RGD"/>
</dbReference>
<dbReference type="GO" id="GO:0005856">
    <property type="term" value="C:cytoskeleton"/>
    <property type="evidence" value="ECO:0000266"/>
    <property type="project" value="RGD"/>
</dbReference>
<dbReference type="GO" id="GO:0005768">
    <property type="term" value="C:endosome"/>
    <property type="evidence" value="ECO:0000314"/>
    <property type="project" value="RGD"/>
</dbReference>
<dbReference type="GO" id="GO:0098888">
    <property type="term" value="C:extrinsic component of presynaptic membrane"/>
    <property type="evidence" value="ECO:0000314"/>
    <property type="project" value="SynGO"/>
</dbReference>
<dbReference type="GO" id="GO:0030175">
    <property type="term" value="C:filopodium"/>
    <property type="evidence" value="ECO:0000314"/>
    <property type="project" value="RGD"/>
</dbReference>
<dbReference type="GO" id="GO:0098978">
    <property type="term" value="C:glutamatergic synapse"/>
    <property type="evidence" value="ECO:0000314"/>
    <property type="project" value="SynGO"/>
</dbReference>
<dbReference type="GO" id="GO:0030426">
    <property type="term" value="C:growth cone"/>
    <property type="evidence" value="ECO:0000314"/>
    <property type="project" value="HGNC-UCL"/>
</dbReference>
<dbReference type="GO" id="GO:0030027">
    <property type="term" value="C:lamellipodium"/>
    <property type="evidence" value="ECO:0000314"/>
    <property type="project" value="RGD"/>
</dbReference>
<dbReference type="GO" id="GO:0016020">
    <property type="term" value="C:membrane"/>
    <property type="evidence" value="ECO:0000250"/>
    <property type="project" value="UniProtKB"/>
</dbReference>
<dbReference type="GO" id="GO:0043005">
    <property type="term" value="C:neuron projection"/>
    <property type="evidence" value="ECO:0000314"/>
    <property type="project" value="HGNC-UCL"/>
</dbReference>
<dbReference type="GO" id="GO:0043025">
    <property type="term" value="C:neuronal cell body"/>
    <property type="evidence" value="ECO:0000314"/>
    <property type="project" value="RGD"/>
</dbReference>
<dbReference type="GO" id="GO:0048471">
    <property type="term" value="C:perinuclear region of cytoplasm"/>
    <property type="evidence" value="ECO:0000266"/>
    <property type="project" value="RGD"/>
</dbReference>
<dbReference type="GO" id="GO:0001917">
    <property type="term" value="C:photoreceptor inner segment"/>
    <property type="evidence" value="ECO:0007669"/>
    <property type="project" value="UniProtKB-SubCell"/>
</dbReference>
<dbReference type="GO" id="GO:0005886">
    <property type="term" value="C:plasma membrane"/>
    <property type="evidence" value="ECO:0000314"/>
    <property type="project" value="ParkinsonsUK-UCL"/>
</dbReference>
<dbReference type="GO" id="GO:0042734">
    <property type="term" value="C:presynaptic membrane"/>
    <property type="evidence" value="ECO:0000314"/>
    <property type="project" value="SynGO"/>
</dbReference>
<dbReference type="GO" id="GO:0097470">
    <property type="term" value="C:ribbon synapse"/>
    <property type="evidence" value="ECO:0000266"/>
    <property type="project" value="RGD"/>
</dbReference>
<dbReference type="GO" id="GO:0031201">
    <property type="term" value="C:SNARE complex"/>
    <property type="evidence" value="ECO:0000314"/>
    <property type="project" value="HGNC-UCL"/>
</dbReference>
<dbReference type="GO" id="GO:0036477">
    <property type="term" value="C:somatodendritic compartment"/>
    <property type="evidence" value="ECO:0000266"/>
    <property type="project" value="RGD"/>
</dbReference>
<dbReference type="GO" id="GO:0045202">
    <property type="term" value="C:synapse"/>
    <property type="evidence" value="ECO:0000266"/>
    <property type="project" value="RGD"/>
</dbReference>
<dbReference type="GO" id="GO:0008021">
    <property type="term" value="C:synaptic vesicle"/>
    <property type="evidence" value="ECO:0000266"/>
    <property type="project" value="RGD"/>
</dbReference>
<dbReference type="GO" id="GO:0070044">
    <property type="term" value="C:synaptobrevin 2-SNAP-25-syntaxin-1a complex"/>
    <property type="evidence" value="ECO:0000314"/>
    <property type="project" value="MGI"/>
</dbReference>
<dbReference type="GO" id="GO:0070032">
    <property type="term" value="C:synaptobrevin 2-SNAP-25-syntaxin-1a-complexin I complex"/>
    <property type="evidence" value="ECO:0000314"/>
    <property type="project" value="MGI"/>
</dbReference>
<dbReference type="GO" id="GO:0070033">
    <property type="term" value="C:synaptobrevin 2-SNAP-25-syntaxin-1a-complexin II complex"/>
    <property type="evidence" value="ECO:0000314"/>
    <property type="project" value="RGD"/>
</dbReference>
<dbReference type="GO" id="GO:0043195">
    <property type="term" value="C:terminal bouton"/>
    <property type="evidence" value="ECO:0007005"/>
    <property type="project" value="ParkinsonsUK-UCL"/>
</dbReference>
<dbReference type="GO" id="GO:0005802">
    <property type="term" value="C:trans-Golgi network"/>
    <property type="evidence" value="ECO:0000266"/>
    <property type="project" value="RGD"/>
</dbReference>
<dbReference type="GO" id="GO:0031982">
    <property type="term" value="C:vesicle"/>
    <property type="evidence" value="ECO:0000266"/>
    <property type="project" value="RGD"/>
</dbReference>
<dbReference type="GO" id="GO:0008076">
    <property type="term" value="C:voltage-gated potassium channel complex"/>
    <property type="evidence" value="ECO:0000314"/>
    <property type="project" value="RGD"/>
</dbReference>
<dbReference type="GO" id="GO:0048306">
    <property type="term" value="F:calcium-dependent protein binding"/>
    <property type="evidence" value="ECO:0000353"/>
    <property type="project" value="ParkinsonsUK-UCL"/>
</dbReference>
<dbReference type="GO" id="GO:0008289">
    <property type="term" value="F:lipid binding"/>
    <property type="evidence" value="ECO:0000266"/>
    <property type="project" value="RGD"/>
</dbReference>
<dbReference type="GO" id="GO:0017022">
    <property type="term" value="F:myosin binding"/>
    <property type="evidence" value="ECO:0000353"/>
    <property type="project" value="RGD"/>
</dbReference>
<dbReference type="GO" id="GO:0019904">
    <property type="term" value="F:protein domain specific binding"/>
    <property type="evidence" value="ECO:0000353"/>
    <property type="project" value="RGD"/>
</dbReference>
<dbReference type="GO" id="GO:0005484">
    <property type="term" value="F:SNAP receptor activity"/>
    <property type="evidence" value="ECO:0000266"/>
    <property type="project" value="RGD"/>
</dbReference>
<dbReference type="GO" id="GO:0000149">
    <property type="term" value="F:SNARE binding"/>
    <property type="evidence" value="ECO:0000314"/>
    <property type="project" value="MGI"/>
</dbReference>
<dbReference type="GO" id="GO:0017075">
    <property type="term" value="F:syntaxin-1 binding"/>
    <property type="evidence" value="ECO:0000314"/>
    <property type="project" value="MGI"/>
</dbReference>
<dbReference type="GO" id="GO:0044325">
    <property type="term" value="F:transmembrane transporter binding"/>
    <property type="evidence" value="ECO:0000353"/>
    <property type="project" value="UniProtKB"/>
</dbReference>
<dbReference type="GO" id="GO:0005249">
    <property type="term" value="F:voltage-gated potassium channel activity"/>
    <property type="evidence" value="ECO:0000314"/>
    <property type="project" value="RGD"/>
</dbReference>
<dbReference type="GO" id="GO:0008306">
    <property type="term" value="P:associative learning"/>
    <property type="evidence" value="ECO:0000266"/>
    <property type="project" value="RGD"/>
</dbReference>
<dbReference type="GO" id="GO:0007409">
    <property type="term" value="P:axonogenesis"/>
    <property type="evidence" value="ECO:0000270"/>
    <property type="project" value="RGD"/>
</dbReference>
<dbReference type="GO" id="GO:0048791">
    <property type="term" value="P:calcium ion-regulated exocytosis of neurotransmitter"/>
    <property type="evidence" value="ECO:0000314"/>
    <property type="project" value="RGD"/>
</dbReference>
<dbReference type="GO" id="GO:0016197">
    <property type="term" value="P:endosomal transport"/>
    <property type="evidence" value="ECO:0000314"/>
    <property type="project" value="RGD"/>
</dbReference>
<dbReference type="GO" id="GO:0006887">
    <property type="term" value="P:exocytosis"/>
    <property type="evidence" value="ECO:0000318"/>
    <property type="project" value="GO_Central"/>
</dbReference>
<dbReference type="GO" id="GO:0007626">
    <property type="term" value="P:locomotory behavior"/>
    <property type="evidence" value="ECO:0000266"/>
    <property type="project" value="RGD"/>
</dbReference>
<dbReference type="GO" id="GO:0007616">
    <property type="term" value="P:long-term memory"/>
    <property type="evidence" value="ECO:0000315"/>
    <property type="project" value="RGD"/>
</dbReference>
<dbReference type="GO" id="GO:0060291">
    <property type="term" value="P:long-term synaptic potentiation"/>
    <property type="evidence" value="ECO:0000266"/>
    <property type="project" value="RGD"/>
</dbReference>
<dbReference type="GO" id="GO:0030182">
    <property type="term" value="P:neuron differentiation"/>
    <property type="evidence" value="ECO:0000270"/>
    <property type="project" value="RGD"/>
</dbReference>
<dbReference type="GO" id="GO:0007269">
    <property type="term" value="P:neurotransmitter secretion"/>
    <property type="evidence" value="ECO:0000266"/>
    <property type="project" value="RGD"/>
</dbReference>
<dbReference type="GO" id="GO:0046887">
    <property type="term" value="P:positive regulation of hormone secretion"/>
    <property type="evidence" value="ECO:0000315"/>
    <property type="project" value="RGD"/>
</dbReference>
<dbReference type="GO" id="GO:0032024">
    <property type="term" value="P:positive regulation of insulin secretion"/>
    <property type="evidence" value="ECO:0000270"/>
    <property type="project" value="RGD"/>
</dbReference>
<dbReference type="GO" id="GO:0099525">
    <property type="term" value="P:presynaptic dense core vesicle exocytosis"/>
    <property type="evidence" value="ECO:0000266"/>
    <property type="project" value="RGD"/>
</dbReference>
<dbReference type="GO" id="GO:0070201">
    <property type="term" value="P:regulation of establishment of protein localization"/>
    <property type="evidence" value="ECO:0000266"/>
    <property type="project" value="RGD"/>
</dbReference>
<dbReference type="GO" id="GO:0010975">
    <property type="term" value="P:regulation of neuron projection development"/>
    <property type="evidence" value="ECO:0000315"/>
    <property type="project" value="ParkinsonsUK-UCL"/>
</dbReference>
<dbReference type="GO" id="GO:0051963">
    <property type="term" value="P:regulation of synapse assembly"/>
    <property type="evidence" value="ECO:0000270"/>
    <property type="project" value="RGD"/>
</dbReference>
<dbReference type="GO" id="GO:0035493">
    <property type="term" value="P:SNARE complex assembly"/>
    <property type="evidence" value="ECO:0000315"/>
    <property type="project" value="CAFA"/>
</dbReference>
<dbReference type="GO" id="GO:0016079">
    <property type="term" value="P:synaptic vesicle exocytosis"/>
    <property type="evidence" value="ECO:0000314"/>
    <property type="project" value="SynGO"/>
</dbReference>
<dbReference type="GO" id="GO:0031629">
    <property type="term" value="P:synaptic vesicle fusion to presynaptic active zone membrane"/>
    <property type="evidence" value="ECO:0000318"/>
    <property type="project" value="GO_Central"/>
</dbReference>
<dbReference type="GO" id="GO:0016082">
    <property type="term" value="P:synaptic vesicle priming"/>
    <property type="evidence" value="ECO:0000318"/>
    <property type="project" value="GO_Central"/>
</dbReference>
<dbReference type="CDD" id="cd15885">
    <property type="entry name" value="SNARE_SNAP25C"/>
    <property type="match status" value="1"/>
</dbReference>
<dbReference type="CDD" id="cd15894">
    <property type="entry name" value="SNARE_SNAP25N"/>
    <property type="match status" value="1"/>
</dbReference>
<dbReference type="FunFam" id="1.20.5.110:FF:000007">
    <property type="entry name" value="Synaptosomal-associated protein"/>
    <property type="match status" value="1"/>
</dbReference>
<dbReference type="FunFam" id="1.20.5.110:FF:000009">
    <property type="entry name" value="Synaptosomal-associated protein"/>
    <property type="match status" value="1"/>
</dbReference>
<dbReference type="Gene3D" id="1.20.5.110">
    <property type="match status" value="2"/>
</dbReference>
<dbReference type="InterPro" id="IPR000928">
    <property type="entry name" value="SNAP-25_dom"/>
</dbReference>
<dbReference type="InterPro" id="IPR039077">
    <property type="entry name" value="SNAP-25_N_SNARE_chord"/>
</dbReference>
<dbReference type="InterPro" id="IPR000727">
    <property type="entry name" value="T_SNARE_dom"/>
</dbReference>
<dbReference type="PANTHER" id="PTHR19305">
    <property type="entry name" value="SYNAPTOSOMAL ASSOCIATED PROTEIN"/>
    <property type="match status" value="1"/>
</dbReference>
<dbReference type="PANTHER" id="PTHR19305:SF5">
    <property type="entry name" value="SYNAPTOSOMAL-ASSOCIATED PROTEIN 25"/>
    <property type="match status" value="1"/>
</dbReference>
<dbReference type="Pfam" id="PF00835">
    <property type="entry name" value="SNAP-25"/>
    <property type="match status" value="1"/>
</dbReference>
<dbReference type="SMART" id="SM00397">
    <property type="entry name" value="t_SNARE"/>
    <property type="match status" value="2"/>
</dbReference>
<dbReference type="SUPFAM" id="SSF58038">
    <property type="entry name" value="SNARE fusion complex"/>
    <property type="match status" value="2"/>
</dbReference>
<dbReference type="PROSITE" id="PS50192">
    <property type="entry name" value="T_SNARE"/>
    <property type="match status" value="2"/>
</dbReference>
<organism>
    <name type="scientific">Rattus norvegicus</name>
    <name type="common">Rat</name>
    <dbReference type="NCBI Taxonomy" id="10116"/>
    <lineage>
        <taxon>Eukaryota</taxon>
        <taxon>Metazoa</taxon>
        <taxon>Chordata</taxon>
        <taxon>Craniata</taxon>
        <taxon>Vertebrata</taxon>
        <taxon>Euteleostomi</taxon>
        <taxon>Mammalia</taxon>
        <taxon>Eutheria</taxon>
        <taxon>Euarchontoglires</taxon>
        <taxon>Glires</taxon>
        <taxon>Rodentia</taxon>
        <taxon>Myomorpha</taxon>
        <taxon>Muroidea</taxon>
        <taxon>Muridae</taxon>
        <taxon>Murinae</taxon>
        <taxon>Rattus</taxon>
    </lineage>
</organism>
<keyword id="KW-0002">3D-structure</keyword>
<keyword id="KW-0025">Alternative splicing</keyword>
<keyword id="KW-1003">Cell membrane</keyword>
<keyword id="KW-0175">Coiled coil</keyword>
<keyword id="KW-0963">Cytoplasm</keyword>
<keyword id="KW-0903">Direct protein sequencing</keyword>
<keyword id="KW-0449">Lipoprotein</keyword>
<keyword id="KW-0472">Membrane</keyword>
<keyword id="KW-0564">Palmitate</keyword>
<keyword id="KW-0597">Phosphoprotein</keyword>
<keyword id="KW-1185">Reference proteome</keyword>
<keyword id="KW-0677">Repeat</keyword>
<keyword id="KW-0770">Synapse</keyword>
<keyword id="KW-0771">Synaptosome</keyword>
<protein>
    <recommendedName>
        <fullName>Synaptosomal-associated protein 25</fullName>
        <shortName>SNAP-25</shortName>
    </recommendedName>
    <alternativeName>
        <fullName>Super protein</fullName>
        <shortName>SUP</shortName>
    </alternativeName>
    <alternativeName>
        <fullName>Synaptosomal-associated 25 kDa protein</fullName>
    </alternativeName>
</protein>
<feature type="chain" id="PRO_0000213592" description="Synaptosomal-associated protein 25">
    <location>
        <begin position="1"/>
        <end position="206"/>
    </location>
</feature>
<feature type="domain" description="t-SNARE coiled-coil homology 1" evidence="4">
    <location>
        <begin position="19"/>
        <end position="81"/>
    </location>
</feature>
<feature type="domain" description="t-SNARE coiled-coil homology 2" evidence="4">
    <location>
        <begin position="140"/>
        <end position="202"/>
    </location>
</feature>
<feature type="region of interest" description="Interaction with CENPF" evidence="1">
    <location>
        <begin position="1"/>
        <end position="75"/>
    </location>
</feature>
<feature type="region of interest" description="Disordered" evidence="5">
    <location>
        <begin position="1"/>
        <end position="23"/>
    </location>
</feature>
<feature type="region of interest" description="Interaction with ZDHHC13 and ZDHHC17" evidence="15">
    <location>
        <begin position="111"/>
        <end position="120"/>
    </location>
</feature>
<feature type="region of interest" description="Interaction with ZDHHC17" evidence="3">
    <location>
        <begin position="111"/>
        <end position="120"/>
    </location>
</feature>
<feature type="compositionally biased region" description="Basic and acidic residues" evidence="5">
    <location>
        <begin position="1"/>
        <end position="20"/>
    </location>
</feature>
<feature type="site" description="(Microbial infection) Cleavage; by C.botulinum neurotoxin type E (BoNT/E)" evidence="16 17 23">
    <location>
        <begin position="180"/>
        <end position="181"/>
    </location>
</feature>
<feature type="site" description="(Microbial infection) Cleavage; by C.botulinum neurotoxin type A (BoNT/A, botA)" evidence="16 17 23">
    <location>
        <begin position="197"/>
        <end position="198"/>
    </location>
</feature>
<feature type="modified residue" description="Phosphothreonine; by PKC and PKA" evidence="10">
    <location>
        <position position="138"/>
    </location>
</feature>
<feature type="modified residue" description="Phosphoserine" evidence="2">
    <location>
        <position position="154"/>
    </location>
</feature>
<feature type="modified residue" description="Phosphoserine; by PKC" evidence="10">
    <location>
        <position position="187"/>
    </location>
</feature>
<feature type="lipid moiety-binding region" description="S-palmitoyl cysteine" evidence="2">
    <location>
        <position position="85"/>
    </location>
</feature>
<feature type="lipid moiety-binding region" description="S-palmitoyl cysteine" evidence="2">
    <location>
        <position position="88"/>
    </location>
</feature>
<feature type="lipid moiety-binding region" description="S-palmitoyl cysteine" evidence="2">
    <location>
        <position position="90"/>
    </location>
</feature>
<feature type="lipid moiety-binding region" description="S-palmitoyl cysteine" evidence="2">
    <location>
        <position position="92"/>
    </location>
</feature>
<feature type="splice variant" id="VSP_010020" description="In isoform 2." evidence="20 21">
    <original>ERIEEGMDQINKDMKEAEKNLTDLGKFCGLCV</original>
    <variation>DRVEEGMNHINQDMKEAEKNLKDLGKCCGLFI</variation>
    <location>
        <begin position="58"/>
        <end position="89"/>
    </location>
</feature>
<feature type="mutagenesis site" description="Inhibits interaction with ZDHHC13 and ZDHHC17." evidence="15">
    <original>V</original>
    <variation>A</variation>
    <location>
        <position position="113"/>
    </location>
</feature>
<feature type="mutagenesis site" description="Inhibits interaction with ZDHHC13 and ZDHHC17." evidence="15">
    <original>Q</original>
    <variation>A</variation>
    <location>
        <position position="116"/>
    </location>
</feature>
<feature type="mutagenesis site" description="Inhibits interaction with ZDHHC13 and ZDHHC17." evidence="15">
    <original>P</original>
    <variation>A</variation>
    <location>
        <position position="117"/>
    </location>
</feature>
<feature type="helix" evidence="25">
    <location>
        <begin position="7"/>
        <end position="82"/>
    </location>
</feature>
<feature type="helix" evidence="25">
    <location>
        <begin position="142"/>
        <end position="201"/>
    </location>
</feature>
<reference key="1">
    <citation type="submission" date="1997-05" db="EMBL/GenBank/DDBJ databases">
        <authorList>
            <person name="Kataoka M."/>
        </authorList>
    </citation>
    <scope>NUCLEOTIDE SEQUENCE [MRNA] (ISOFORMS 1 AND 2)</scope>
</reference>
<reference key="2">
    <citation type="submission" date="2000-03" db="EMBL/GenBank/DDBJ databases">
        <title>Cloning of the SNAP-25 gene from a rat brain cDNA library.</title>
        <authorList>
            <person name="Cho A.R."/>
            <person name="You K.H."/>
        </authorList>
    </citation>
    <scope>NUCLEOTIDE SEQUENCE [MRNA] (ISOFORM 2)</scope>
    <source>
        <tissue>Brain</tissue>
    </source>
</reference>
<reference key="3">
    <citation type="journal article" date="2004" name="Genome Res.">
        <title>The status, quality, and expansion of the NIH full-length cDNA project: the Mammalian Gene Collection (MGC).</title>
        <authorList>
            <consortium name="The MGC Project Team"/>
        </authorList>
    </citation>
    <scope>NUCLEOTIDE SEQUENCE [LARGE SCALE MRNA] (ISOFORM 1)</scope>
    <source>
        <tissue>Brain</tissue>
    </source>
</reference>
<reference key="4">
    <citation type="journal article" date="1999" name="J. Neurochem.">
        <title>SNARE complex proteins, including the cognate pair VAMP-2 and syntaxin-4, are expressed in cultured oligodendrocytes.</title>
        <authorList>
            <person name="Madison D.L."/>
            <person name="Krueger W.H."/>
            <person name="Cheng D."/>
            <person name="Trapp B.D."/>
            <person name="Pfeiffer S.E."/>
        </authorList>
    </citation>
    <scope>NUCLEOTIDE SEQUENCE [MRNA] OF 10-190 (ISOFORM 1)</scope>
    <source>
        <tissue>Brain</tissue>
    </source>
</reference>
<reference key="5">
    <citation type="submission" date="2007-09" db="UniProtKB">
        <authorList>
            <person name="Lubec G."/>
            <person name="Afjehi-Sadat L."/>
            <person name="Diao W."/>
            <person name="Kang S.U."/>
            <person name="Lubec S."/>
        </authorList>
    </citation>
    <scope>PROTEIN SEQUENCE OF 46-69; 84-94; 104-119; 125-136 AND 143-161</scope>
    <scope>IDENTIFICATION BY MASS SPECTROMETRY</scope>
    <source>
        <strain>Sprague-Dawley</strain>
        <tissue>Brain</tissue>
        <tissue>Hippocampus</tissue>
        <tissue>Spinal cord</tissue>
    </source>
</reference>
<reference key="6">
    <citation type="journal article" date="1992" name="J. Neurosci.">
        <title>The 25 kDa synaptosomal-associated protein SNAP-25 is the major methionine-rich polypeptide in rapid axonal transport and a major substrate for palmitoylation in adult CNS.</title>
        <authorList>
            <person name="Hess D.T."/>
            <person name="Slater T.M."/>
            <person name="Wilson M.C."/>
            <person name="Skene J.H.P."/>
        </authorList>
    </citation>
    <scope>PALMITOYLATION</scope>
    <scope>SUBCELLULAR LOCATION</scope>
</reference>
<reference key="7">
    <citation type="journal article" date="1993" name="FEBS Lett.">
        <title>Botulinum neurotoxins serotypes A and E cleave SNAP-25 at distinct COOH-terminal peptide bonds.</title>
        <authorList>
            <person name="Schiavo G."/>
            <person name="Santtuci A."/>
            <person name="Dasgupta B.R."/>
            <person name="Mehta P.P."/>
            <person name="Jontes J."/>
            <person name="Benfenati F."/>
            <person name="Wilson M.C."/>
            <person name="Montecucco C."/>
        </authorList>
    </citation>
    <scope>FUNCTION</scope>
    <scope>PROTEOLYTIC CLEAVAGE (MICROBIAL INFECTION) BY C.BOTULINUM NEUROTOXIN TYPES A AND E</scope>
</reference>
<reference key="8">
    <citation type="journal article" date="1993" name="Nature">
        <title>Botulinum neurotoxin A selectively cleaves the synaptic protein SNAP-25.</title>
        <authorList>
            <person name="Blasi J."/>
            <person name="Chapman E.R."/>
            <person name="Link E."/>
            <person name="Binz T."/>
            <person name="Yamasaki S."/>
            <person name="De Camilli P."/>
            <person name="Suedhof T.C."/>
            <person name="Niemann H."/>
            <person name="Jahn R."/>
        </authorList>
    </citation>
    <scope>FUNCTION</scope>
    <scope>PROTEOLYTIC CLEAVAGE (MICROBIAL INFECTION) BY C.BOTULINUM NEUROTOXIN TYPES A AND E</scope>
</reference>
<reference key="9">
    <citation type="journal article" date="1994" name="J. Biol. Chem.">
        <title>Proteolysis of SNAP-25 by types E and A botulinal neurotoxins.</title>
        <authorList>
            <person name="Binz T."/>
            <person name="Blasi J."/>
            <person name="Yamasaki S."/>
            <person name="Baumeister A."/>
            <person name="Link E."/>
            <person name="Suedhof T.C."/>
            <person name="Jahn R."/>
            <person name="Niemann H."/>
        </authorList>
    </citation>
    <scope>PROTEOLYTIC CLEAVAGE (MICROBIAL INFECTION) BY C.BOTULINUM NEUROTOXIN TYPES A AND E</scope>
</reference>
<reference key="10">
    <citation type="journal article" date="2002" name="FEBS Lett.">
        <title>Differential phosphorylation of SNAP-25 in vivo by protein kinase C and protein kinase A.</title>
        <authorList>
            <person name="Hepp R."/>
            <person name="Cabaniols J.-P."/>
            <person name="Roche P.A."/>
        </authorList>
    </citation>
    <scope>PHOSPHORYLATION AT THR-138 AND SER-187</scope>
</reference>
<reference key="11">
    <citation type="journal article" date="1996" name="Brain Res. Mol. Brain Res.">
        <title>Differential subcellular localization of SNAP-25a and SNAP-25b RNA transcripts in spinal motoneurons and plasticity in expression after nerve injury.</title>
        <authorList>
            <person name="Jacobsson G."/>
            <person name="Piehl F."/>
            <person name="Bark I.C."/>
            <person name="Zhang X."/>
            <person name="Meister B."/>
        </authorList>
    </citation>
    <scope>SUBCELLULAR LOCATION OF RNA TRANSCRIPTS</scope>
</reference>
<reference key="12">
    <citation type="journal article" date="1997" name="Nature">
        <title>Hrs-2 is an ATPase implicated in calcium-regulated secretion.</title>
        <authorList>
            <person name="Bean A.J."/>
            <person name="Seifert R."/>
            <person name="Chen Y.A."/>
            <person name="Sacks R."/>
            <person name="Scheller R.H."/>
        </authorList>
    </citation>
    <scope>INTERACTION WITH HGS</scope>
</reference>
<reference key="13">
    <citation type="journal article" date="1999" name="J. Biol. Chem.">
        <title>Mixed and non-cognate SNARE complexes. Characterization of assembly and biophysical properties.</title>
        <authorList>
            <person name="Fasshauer D."/>
            <person name="Antonin W."/>
            <person name="Margittai M."/>
            <person name="Pabst S."/>
            <person name="Jahn R."/>
        </authorList>
    </citation>
    <scope>IDENTIFICATION IN A TERNARY COMPLEX WITH STX1A AND VAMP8</scope>
</reference>
<reference key="14">
    <citation type="journal article" date="2001" name="J. Biol. Chem.">
        <title>Direct interaction of the Rab3 effector RIM with Ca2+ channels, SNAP-25, and synaptotagmin.</title>
        <authorList>
            <person name="Coppola T."/>
            <person name="Magnin-Luethi S."/>
            <person name="Perret-Menoud V."/>
            <person name="Gattesco S."/>
            <person name="Schiavo G."/>
            <person name="Regazzi R."/>
        </authorList>
    </citation>
    <scope>INTERACTION WITH RIMS1</scope>
</reference>
<reference key="15">
    <citation type="journal article" date="2002" name="J. Biol. Chem.">
        <title>Amisyn, a novel syntaxin-binding protein that may regulate SNARE complex assembly.</title>
        <authorList>
            <person name="Scales S.J."/>
            <person name="Hesser B.A."/>
            <person name="Masuda E.S."/>
            <person name="Scheller R.H."/>
        </authorList>
    </citation>
    <scope>INTERACTION WITH STXBP6</scope>
</reference>
<reference key="16">
    <citation type="journal article" date="2002" name="Mol. Endocrinol.">
        <title>Synaptosome-associated protein of 25 kilodaltons modulates Kv2.1 voltage-dependent K(+) channels in neuroendocrine islet beta-cells through an interaction with the channel N terminus.</title>
        <authorList>
            <person name="MacDonald P.E."/>
            <person name="Wang G."/>
            <person name="Tsuk S."/>
            <person name="Dodo C."/>
            <person name="Kang Y."/>
            <person name="Tang L."/>
            <person name="Wheeler M.B."/>
            <person name="Cattral M.S."/>
            <person name="Lakey J.R."/>
            <person name="Salapatek A.M."/>
            <person name="Lotan I."/>
            <person name="Gaisano H.Y."/>
        </authorList>
    </citation>
    <scope>FUNCTION</scope>
    <scope>INTERACTION WITH KCNB1</scope>
    <scope>SUBCELLULAR LOCATION</scope>
</reference>
<reference key="17">
    <citation type="journal article" date="2009" name="J. Neurochem.">
        <title>Sept8 controls the binding of vesicle-associated membrane protein 2 to synaptophysin.</title>
        <authorList>
            <person name="Ito H."/>
            <person name="Atsuzawa K."/>
            <person name="Morishita R."/>
            <person name="Usuda N."/>
            <person name="Sudo K."/>
            <person name="Iwamoto I."/>
            <person name="Mizutani K."/>
            <person name="Katoh-Semba R."/>
            <person name="Nozawa Y."/>
            <person name="Asano T."/>
            <person name="Nagata K."/>
        </authorList>
    </citation>
    <scope>INTERACTION WITH VAMP2</scope>
</reference>
<reference key="18">
    <citation type="journal article" date="2013" name="J. Biol. Chem.">
        <title>PRIP (phospholipase C-related but catalytically inactive protein) inhibits exocytosis by direct interactions with syntaxin 1 and SNAP-25 through its C2 domain.</title>
        <authorList>
            <person name="Zhang Z."/>
            <person name="Takeuchi H."/>
            <person name="Gao J."/>
            <person name="Wang D."/>
            <person name="James D.J."/>
            <person name="Martin T.F."/>
            <person name="Hirata M."/>
        </authorList>
    </citation>
    <scope>INTERACTION WITH PLCL1</scope>
    <scope>SUBCELLULAR LOCATION</scope>
</reference>
<reference key="19">
    <citation type="journal article" date="2015" name="J. Biol. Chem.">
        <title>Identification of a novel sequence motif recognized by the ankyrin repeat domain of zDHHC17/13 S-acyltransferases.</title>
        <authorList>
            <person name="Lemonidis K."/>
            <person name="Sanchez-Perez M.C."/>
            <person name="Chamberlain L.H."/>
        </authorList>
    </citation>
    <scope>INTERACTION WITH ZDHHC17 AND ZDHHC13</scope>
    <scope>MUTAGENESIS OF VAL-113; GLN-116 AND PRO-117</scope>
</reference>
<reference key="20">
    <citation type="journal article" date="1998" name="Nature">
        <title>Crystal structure of a SNARE complex involved in synaptic exocytosis at 2.4 A resolution.</title>
        <authorList>
            <person name="Sutton R.B."/>
            <person name="Fasshauer D."/>
            <person name="Jahn R."/>
            <person name="Brunger A.T."/>
        </authorList>
    </citation>
    <scope>X-RAY CRYSTALLOGRAPHY (2.4 ANGSTROMS) OF 1-83 AND 120-206 IN COMPLEX WITH STX1A AND VAMP2</scope>
</reference>
<reference key="21">
    <citation type="journal article" date="2001" name="J. Biol. Chem.">
        <title>Crystal structure and biophysical properties of a complex between the N-terminal SNARE region of SNAP25 and syntaxin 1a.</title>
        <authorList>
            <person name="Misura K.M.S."/>
            <person name="Gonzalez L.C. Jr."/>
            <person name="May A.P."/>
            <person name="Scheller R.H."/>
            <person name="Weis W.I."/>
        </authorList>
    </citation>
    <scope>X-RAY CRYSTALLOGRAPHY (2.0 ANGSTROMS) OF 1-83 IN COMPLEX WITH STX1A</scope>
</reference>
<reference key="22">
    <citation type="journal article" date="2003" name="J. Biol. Chem.">
        <title>High resolution structure, stability, and synaptotagmin binding of a truncated neuronal SNARE complex.</title>
        <authorList>
            <person name="Ernst J.A."/>
            <person name="Brunger A.T."/>
        </authorList>
    </citation>
    <scope>X-RAY CRYSTALLOGRAPHY (1.45 ANGSTROMS) OF 7-83 AND 141-204 IN COMPLEX WITH STX1A AND VAMP2</scope>
</reference>
<sequence>MAEDADMRNELEEMQRRADQLADESLESTRRMLQLVEESKDAGIRTLVMLDEQGEQLERIEEGMDQINKDMKEAEKNLTDLGKFCGLCVCPCNKLKSSDAYKKAWGNNQDGVVASQPARVVDEREQMAISGGFIRRVTNDARENEMDENLEQVSGIIGNLRHMALDMGNEIDTQNRQIDRIMEKADSNKTRIDEANQRATKMLGSG</sequence>
<gene>
    <name type="primary">Snap25</name>
    <name type="synonym">Snap</name>
</gene>
<name>SNP25_RAT</name>